<sequence>MKLNQISDNPGATKDRMRVGRGIGSGKGKTAGRGVKGQKARTGVAIKGFEGGQMPLHRRLPKRGFNNLYAQDLNEVNLGRIQEAVDAGKLDKAATVTVESLVAAGIIARPRDGVKLLGVGELTAKLSFEVTRASKSAVEAVEKAGGSVSVVYAQGASTRGGSEAATA</sequence>
<keyword id="KW-0687">Ribonucleoprotein</keyword>
<keyword id="KW-0689">Ribosomal protein</keyword>
<keyword id="KW-0694">RNA-binding</keyword>
<keyword id="KW-0699">rRNA-binding</keyword>
<reference key="1">
    <citation type="submission" date="2008-03" db="EMBL/GenBank/DDBJ databases">
        <title>Complete sequence of chromosome of Methylobacterium radiotolerans JCM 2831.</title>
        <authorList>
            <consortium name="US DOE Joint Genome Institute"/>
            <person name="Copeland A."/>
            <person name="Lucas S."/>
            <person name="Lapidus A."/>
            <person name="Glavina del Rio T."/>
            <person name="Dalin E."/>
            <person name="Tice H."/>
            <person name="Bruce D."/>
            <person name="Goodwin L."/>
            <person name="Pitluck S."/>
            <person name="Kiss H."/>
            <person name="Brettin T."/>
            <person name="Detter J.C."/>
            <person name="Han C."/>
            <person name="Kuske C.R."/>
            <person name="Schmutz J."/>
            <person name="Larimer F."/>
            <person name="Land M."/>
            <person name="Hauser L."/>
            <person name="Kyrpides N."/>
            <person name="Mikhailova N."/>
            <person name="Marx C.J."/>
            <person name="Richardson P."/>
        </authorList>
    </citation>
    <scope>NUCLEOTIDE SEQUENCE [LARGE SCALE GENOMIC DNA]</scope>
    <source>
        <strain>ATCC 27329 / DSM 1819 / JCM 2831 / NBRC 15690 / NCIMB 10815 / 0-1</strain>
    </source>
</reference>
<feature type="chain" id="PRO_1000142842" description="Large ribosomal subunit protein uL15">
    <location>
        <begin position="1"/>
        <end position="167"/>
    </location>
</feature>
<feature type="region of interest" description="Disordered" evidence="2">
    <location>
        <begin position="1"/>
        <end position="37"/>
    </location>
</feature>
<feature type="compositionally biased region" description="Polar residues" evidence="2">
    <location>
        <begin position="1"/>
        <end position="10"/>
    </location>
</feature>
<feature type="compositionally biased region" description="Gly residues" evidence="2">
    <location>
        <begin position="21"/>
        <end position="35"/>
    </location>
</feature>
<name>RL15_METRJ</name>
<accession>B1LWQ7</accession>
<dbReference type="EMBL" id="CP001001">
    <property type="protein sequence ID" value="ACB24194.1"/>
    <property type="molecule type" value="Genomic_DNA"/>
</dbReference>
<dbReference type="RefSeq" id="WP_012319171.1">
    <property type="nucleotide sequence ID" value="NC_010505.1"/>
</dbReference>
<dbReference type="SMR" id="B1LWQ7"/>
<dbReference type="STRING" id="426355.Mrad2831_2199"/>
<dbReference type="GeneID" id="6138231"/>
<dbReference type="KEGG" id="mrd:Mrad2831_2199"/>
<dbReference type="eggNOG" id="COG0200">
    <property type="taxonomic scope" value="Bacteria"/>
</dbReference>
<dbReference type="HOGENOM" id="CLU_055188_4_0_5"/>
<dbReference type="OrthoDB" id="9810293at2"/>
<dbReference type="Proteomes" id="UP000006589">
    <property type="component" value="Chromosome"/>
</dbReference>
<dbReference type="GO" id="GO:0022625">
    <property type="term" value="C:cytosolic large ribosomal subunit"/>
    <property type="evidence" value="ECO:0007669"/>
    <property type="project" value="TreeGrafter"/>
</dbReference>
<dbReference type="GO" id="GO:0019843">
    <property type="term" value="F:rRNA binding"/>
    <property type="evidence" value="ECO:0007669"/>
    <property type="project" value="UniProtKB-UniRule"/>
</dbReference>
<dbReference type="GO" id="GO:0003735">
    <property type="term" value="F:structural constituent of ribosome"/>
    <property type="evidence" value="ECO:0007669"/>
    <property type="project" value="InterPro"/>
</dbReference>
<dbReference type="GO" id="GO:0006412">
    <property type="term" value="P:translation"/>
    <property type="evidence" value="ECO:0007669"/>
    <property type="project" value="UniProtKB-UniRule"/>
</dbReference>
<dbReference type="Gene3D" id="3.100.10.10">
    <property type="match status" value="1"/>
</dbReference>
<dbReference type="HAMAP" id="MF_01341">
    <property type="entry name" value="Ribosomal_uL15"/>
    <property type="match status" value="1"/>
</dbReference>
<dbReference type="InterPro" id="IPR030878">
    <property type="entry name" value="Ribosomal_uL15"/>
</dbReference>
<dbReference type="InterPro" id="IPR021131">
    <property type="entry name" value="Ribosomal_uL15/eL18"/>
</dbReference>
<dbReference type="InterPro" id="IPR036227">
    <property type="entry name" value="Ribosomal_uL15/eL18_sf"/>
</dbReference>
<dbReference type="InterPro" id="IPR005749">
    <property type="entry name" value="Ribosomal_uL15_bac-type"/>
</dbReference>
<dbReference type="InterPro" id="IPR001196">
    <property type="entry name" value="Ribosomal_uL15_CS"/>
</dbReference>
<dbReference type="NCBIfam" id="TIGR01071">
    <property type="entry name" value="rplO_bact"/>
    <property type="match status" value="1"/>
</dbReference>
<dbReference type="PANTHER" id="PTHR12934">
    <property type="entry name" value="50S RIBOSOMAL PROTEIN L15"/>
    <property type="match status" value="1"/>
</dbReference>
<dbReference type="PANTHER" id="PTHR12934:SF11">
    <property type="entry name" value="LARGE RIBOSOMAL SUBUNIT PROTEIN UL15M"/>
    <property type="match status" value="1"/>
</dbReference>
<dbReference type="Pfam" id="PF00828">
    <property type="entry name" value="Ribosomal_L27A"/>
    <property type="match status" value="1"/>
</dbReference>
<dbReference type="SUPFAM" id="SSF52080">
    <property type="entry name" value="Ribosomal proteins L15p and L18e"/>
    <property type="match status" value="1"/>
</dbReference>
<dbReference type="PROSITE" id="PS00475">
    <property type="entry name" value="RIBOSOMAL_L15"/>
    <property type="match status" value="1"/>
</dbReference>
<protein>
    <recommendedName>
        <fullName evidence="1">Large ribosomal subunit protein uL15</fullName>
    </recommendedName>
    <alternativeName>
        <fullName evidence="3">50S ribosomal protein L15</fullName>
    </alternativeName>
</protein>
<gene>
    <name evidence="1" type="primary">rplO</name>
    <name type="ordered locus">Mrad2831_2199</name>
</gene>
<evidence type="ECO:0000255" key="1">
    <source>
        <dbReference type="HAMAP-Rule" id="MF_01341"/>
    </source>
</evidence>
<evidence type="ECO:0000256" key="2">
    <source>
        <dbReference type="SAM" id="MobiDB-lite"/>
    </source>
</evidence>
<evidence type="ECO:0000305" key="3"/>
<proteinExistence type="inferred from homology"/>
<organism>
    <name type="scientific">Methylobacterium radiotolerans (strain ATCC 27329 / DSM 1819 / JCM 2831 / NBRC 15690 / NCIMB 10815 / 0-1)</name>
    <dbReference type="NCBI Taxonomy" id="426355"/>
    <lineage>
        <taxon>Bacteria</taxon>
        <taxon>Pseudomonadati</taxon>
        <taxon>Pseudomonadota</taxon>
        <taxon>Alphaproteobacteria</taxon>
        <taxon>Hyphomicrobiales</taxon>
        <taxon>Methylobacteriaceae</taxon>
        <taxon>Methylobacterium</taxon>
    </lineage>
</organism>
<comment type="function">
    <text evidence="1">Binds to the 23S rRNA.</text>
</comment>
<comment type="subunit">
    <text evidence="1">Part of the 50S ribosomal subunit.</text>
</comment>
<comment type="similarity">
    <text evidence="1">Belongs to the universal ribosomal protein uL15 family.</text>
</comment>